<dbReference type="EMBL" id="AAFI02000079">
    <property type="protein sequence ID" value="EAL64618.1"/>
    <property type="molecule type" value="Genomic_DNA"/>
</dbReference>
<dbReference type="RefSeq" id="XP_638126.1">
    <property type="nucleotide sequence ID" value="XM_633034.1"/>
</dbReference>
<dbReference type="SMR" id="Q54N17"/>
<dbReference type="FunCoup" id="Q54N17">
    <property type="interactions" value="458"/>
</dbReference>
<dbReference type="STRING" id="44689.Q54N17"/>
<dbReference type="PaxDb" id="44689-DDB0231047"/>
<dbReference type="EnsemblProtists" id="EAL64618">
    <property type="protein sequence ID" value="EAL64618"/>
    <property type="gene ID" value="DDB_G0285561"/>
</dbReference>
<dbReference type="GeneID" id="8625175"/>
<dbReference type="KEGG" id="ddi:DDB_G0285561"/>
<dbReference type="dictyBase" id="DDB_G0285561">
    <property type="gene designation" value="rps15"/>
</dbReference>
<dbReference type="VEuPathDB" id="AmoebaDB:DDB_G0285561"/>
<dbReference type="eggNOG" id="KOG0898">
    <property type="taxonomic scope" value="Eukaryota"/>
</dbReference>
<dbReference type="HOGENOM" id="CLU_097347_1_0_1"/>
<dbReference type="InParanoid" id="Q54N17"/>
<dbReference type="OMA" id="KTHCRDM"/>
<dbReference type="PhylomeDB" id="Q54N17"/>
<dbReference type="Reactome" id="R-DDI-156827">
    <property type="pathway name" value="L13a-mediated translational silencing of Ceruloplasmin expression"/>
</dbReference>
<dbReference type="Reactome" id="R-DDI-1799339">
    <property type="pathway name" value="SRP-dependent cotranslational protein targeting to membrane"/>
</dbReference>
<dbReference type="Reactome" id="R-DDI-72689">
    <property type="pathway name" value="Formation of a pool of free 40S subunits"/>
</dbReference>
<dbReference type="Reactome" id="R-DDI-72695">
    <property type="pathway name" value="Formation of the ternary complex, and subsequently, the 43S complex"/>
</dbReference>
<dbReference type="Reactome" id="R-DDI-72702">
    <property type="pathway name" value="Ribosomal scanning and start codon recognition"/>
</dbReference>
<dbReference type="Reactome" id="R-DDI-72706">
    <property type="pathway name" value="GTP hydrolysis and joining of the 60S ribosomal subunit"/>
</dbReference>
<dbReference type="Reactome" id="R-DDI-975956">
    <property type="pathway name" value="Nonsense Mediated Decay (NMD) independent of the Exon Junction Complex (EJC)"/>
</dbReference>
<dbReference type="Reactome" id="R-DDI-975957">
    <property type="pathway name" value="Nonsense Mediated Decay (NMD) enhanced by the Exon Junction Complex (EJC)"/>
</dbReference>
<dbReference type="PRO" id="PR:Q54N17"/>
<dbReference type="Proteomes" id="UP000002195">
    <property type="component" value="Chromosome 4"/>
</dbReference>
<dbReference type="GO" id="GO:0022627">
    <property type="term" value="C:cytosolic small ribosomal subunit"/>
    <property type="evidence" value="ECO:0000318"/>
    <property type="project" value="GO_Central"/>
</dbReference>
<dbReference type="GO" id="GO:0003735">
    <property type="term" value="F:structural constituent of ribosome"/>
    <property type="evidence" value="ECO:0000318"/>
    <property type="project" value="GO_Central"/>
</dbReference>
<dbReference type="GO" id="GO:0000028">
    <property type="term" value="P:ribosomal small subunit assembly"/>
    <property type="evidence" value="ECO:0000318"/>
    <property type="project" value="GO_Central"/>
</dbReference>
<dbReference type="GO" id="GO:0006412">
    <property type="term" value="P:translation"/>
    <property type="evidence" value="ECO:0007669"/>
    <property type="project" value="InterPro"/>
</dbReference>
<dbReference type="FunFam" id="3.30.860.10:FF:000002">
    <property type="entry name" value="40S ribosomal protein S15"/>
    <property type="match status" value="1"/>
</dbReference>
<dbReference type="Gene3D" id="3.30.860.10">
    <property type="entry name" value="30s Ribosomal Protein S19, Chain A"/>
    <property type="match status" value="1"/>
</dbReference>
<dbReference type="HAMAP" id="MF_00531">
    <property type="entry name" value="Ribosomal_uS19"/>
    <property type="match status" value="1"/>
</dbReference>
<dbReference type="InterPro" id="IPR002222">
    <property type="entry name" value="Ribosomal_uS19"/>
</dbReference>
<dbReference type="InterPro" id="IPR005713">
    <property type="entry name" value="Ribosomal_uS19_euk/arc"/>
</dbReference>
<dbReference type="InterPro" id="IPR023575">
    <property type="entry name" value="Ribosomal_uS19_SF"/>
</dbReference>
<dbReference type="NCBIfam" id="NF003121">
    <property type="entry name" value="PRK04038.1"/>
    <property type="match status" value="1"/>
</dbReference>
<dbReference type="NCBIfam" id="TIGR01025">
    <property type="entry name" value="uS19_arch"/>
    <property type="match status" value="1"/>
</dbReference>
<dbReference type="PANTHER" id="PTHR11880">
    <property type="entry name" value="RIBOSOMAL PROTEIN S19P FAMILY MEMBER"/>
    <property type="match status" value="1"/>
</dbReference>
<dbReference type="PANTHER" id="PTHR11880:SF2">
    <property type="entry name" value="SMALL RIBOSOMAL SUBUNIT PROTEIN US19"/>
    <property type="match status" value="1"/>
</dbReference>
<dbReference type="Pfam" id="PF00203">
    <property type="entry name" value="Ribosomal_S19"/>
    <property type="match status" value="1"/>
</dbReference>
<dbReference type="PIRSF" id="PIRSF002144">
    <property type="entry name" value="Ribosomal_S19"/>
    <property type="match status" value="1"/>
</dbReference>
<dbReference type="PRINTS" id="PR00975">
    <property type="entry name" value="RIBOSOMALS19"/>
</dbReference>
<dbReference type="SUPFAM" id="SSF54570">
    <property type="entry name" value="Ribosomal protein S19"/>
    <property type="match status" value="1"/>
</dbReference>
<gene>
    <name type="primary">rps15</name>
    <name type="ORF">DDB_G0285561</name>
</gene>
<name>RS15_DICDI</name>
<organism>
    <name type="scientific">Dictyostelium discoideum</name>
    <name type="common">Social amoeba</name>
    <dbReference type="NCBI Taxonomy" id="44689"/>
    <lineage>
        <taxon>Eukaryota</taxon>
        <taxon>Amoebozoa</taxon>
        <taxon>Evosea</taxon>
        <taxon>Eumycetozoa</taxon>
        <taxon>Dictyostelia</taxon>
        <taxon>Dictyosteliales</taxon>
        <taxon>Dictyosteliaceae</taxon>
        <taxon>Dictyostelium</taxon>
    </lineage>
</organism>
<sequence>MSEQIKKRTFKKFTYSGVALESLLDLKEEQLISLLRCRARRKLRRETPIKHVNFLKKCRASKAAVTQVGEKPALVKTHARNILIVPEMIGSVIGIYNGKVFNQVEVKPEMIGHYTGEFSLSYKSVNHGRPGIGATHSSRFIPLK</sequence>
<comment type="similarity">
    <text evidence="1">Belongs to the universal ribosomal protein uS19 family.</text>
</comment>
<accession>Q54N17</accession>
<evidence type="ECO:0000305" key="1"/>
<feature type="chain" id="PRO_0000323424" description="Small ribosomal subunit protein uS19">
    <location>
        <begin position="1"/>
        <end position="144"/>
    </location>
</feature>
<keyword id="KW-1185">Reference proteome</keyword>
<keyword id="KW-0687">Ribonucleoprotein</keyword>
<keyword id="KW-0689">Ribosomal protein</keyword>
<reference key="1">
    <citation type="journal article" date="2005" name="Nature">
        <title>The genome of the social amoeba Dictyostelium discoideum.</title>
        <authorList>
            <person name="Eichinger L."/>
            <person name="Pachebat J.A."/>
            <person name="Gloeckner G."/>
            <person name="Rajandream M.A."/>
            <person name="Sucgang R."/>
            <person name="Berriman M."/>
            <person name="Song J."/>
            <person name="Olsen R."/>
            <person name="Szafranski K."/>
            <person name="Xu Q."/>
            <person name="Tunggal B."/>
            <person name="Kummerfeld S."/>
            <person name="Madera M."/>
            <person name="Konfortov B.A."/>
            <person name="Rivero F."/>
            <person name="Bankier A.T."/>
            <person name="Lehmann R."/>
            <person name="Hamlin N."/>
            <person name="Davies R."/>
            <person name="Gaudet P."/>
            <person name="Fey P."/>
            <person name="Pilcher K."/>
            <person name="Chen G."/>
            <person name="Saunders D."/>
            <person name="Sodergren E.J."/>
            <person name="Davis P."/>
            <person name="Kerhornou A."/>
            <person name="Nie X."/>
            <person name="Hall N."/>
            <person name="Anjard C."/>
            <person name="Hemphill L."/>
            <person name="Bason N."/>
            <person name="Farbrother P."/>
            <person name="Desany B."/>
            <person name="Just E."/>
            <person name="Morio T."/>
            <person name="Rost R."/>
            <person name="Churcher C.M."/>
            <person name="Cooper J."/>
            <person name="Haydock S."/>
            <person name="van Driessche N."/>
            <person name="Cronin A."/>
            <person name="Goodhead I."/>
            <person name="Muzny D.M."/>
            <person name="Mourier T."/>
            <person name="Pain A."/>
            <person name="Lu M."/>
            <person name="Harper D."/>
            <person name="Lindsay R."/>
            <person name="Hauser H."/>
            <person name="James K.D."/>
            <person name="Quiles M."/>
            <person name="Madan Babu M."/>
            <person name="Saito T."/>
            <person name="Buchrieser C."/>
            <person name="Wardroper A."/>
            <person name="Felder M."/>
            <person name="Thangavelu M."/>
            <person name="Johnson D."/>
            <person name="Knights A."/>
            <person name="Loulseged H."/>
            <person name="Mungall K.L."/>
            <person name="Oliver K."/>
            <person name="Price C."/>
            <person name="Quail M.A."/>
            <person name="Urushihara H."/>
            <person name="Hernandez J."/>
            <person name="Rabbinowitsch E."/>
            <person name="Steffen D."/>
            <person name="Sanders M."/>
            <person name="Ma J."/>
            <person name="Kohara Y."/>
            <person name="Sharp S."/>
            <person name="Simmonds M.N."/>
            <person name="Spiegler S."/>
            <person name="Tivey A."/>
            <person name="Sugano S."/>
            <person name="White B."/>
            <person name="Walker D."/>
            <person name="Woodward J.R."/>
            <person name="Winckler T."/>
            <person name="Tanaka Y."/>
            <person name="Shaulsky G."/>
            <person name="Schleicher M."/>
            <person name="Weinstock G.M."/>
            <person name="Rosenthal A."/>
            <person name="Cox E.C."/>
            <person name="Chisholm R.L."/>
            <person name="Gibbs R.A."/>
            <person name="Loomis W.F."/>
            <person name="Platzer M."/>
            <person name="Kay R.R."/>
            <person name="Williams J.G."/>
            <person name="Dear P.H."/>
            <person name="Noegel A.A."/>
            <person name="Barrell B.G."/>
            <person name="Kuspa A."/>
        </authorList>
    </citation>
    <scope>NUCLEOTIDE SEQUENCE [LARGE SCALE GENOMIC DNA]</scope>
    <source>
        <strain>AX4</strain>
    </source>
</reference>
<proteinExistence type="inferred from homology"/>
<protein>
    <recommendedName>
        <fullName evidence="1">Small ribosomal subunit protein uS19</fullName>
    </recommendedName>
    <alternativeName>
        <fullName>40S ribosomal protein S15</fullName>
    </alternativeName>
</protein>